<reference key="1">
    <citation type="journal article" date="2005" name="Nucleic Acids Res.">
        <title>Genome dynamics and diversity of Shigella species, the etiologic agents of bacillary dysentery.</title>
        <authorList>
            <person name="Yang F."/>
            <person name="Yang J."/>
            <person name="Zhang X."/>
            <person name="Chen L."/>
            <person name="Jiang Y."/>
            <person name="Yan Y."/>
            <person name="Tang X."/>
            <person name="Wang J."/>
            <person name="Xiong Z."/>
            <person name="Dong J."/>
            <person name="Xue Y."/>
            <person name="Zhu Y."/>
            <person name="Xu X."/>
            <person name="Sun L."/>
            <person name="Chen S."/>
            <person name="Nie H."/>
            <person name="Peng J."/>
            <person name="Xu J."/>
            <person name="Wang Y."/>
            <person name="Yuan Z."/>
            <person name="Wen Y."/>
            <person name="Yao Z."/>
            <person name="Shen Y."/>
            <person name="Qiang B."/>
            <person name="Hou Y."/>
            <person name="Yu J."/>
            <person name="Jin Q."/>
        </authorList>
    </citation>
    <scope>NUCLEOTIDE SEQUENCE [LARGE SCALE GENOMIC DNA]</scope>
    <source>
        <strain>Sb227</strain>
    </source>
</reference>
<sequence>MTTLLNPYFGEFGGMYVPQILMPALRQLEEAFVSAQKDPEFQAQFNDLLKNYAGRPTALTKCQNITAGTNTTLYLKREDLLHGGAHKTNQVLGQALLAKRMGKTEIIAETGAGQHGVASALASALLGLKCRIYMGAKDVERQSPNVFRMRLMGAEVIPVHSGSATLKDACNEALRDWSGSYETAHYMLGTAAGPHPYPTIVCEFQRMIGEETKAQILEREGRLPDAVIACVGGGSNAIGMFADFINETNVGLIGVEPGGHGIETGEHGAPLKHGRVGIYFGMKAPMMQTEDGQIEESYSISAGLDFPSVGPQHAYLNSTGRADYVSITDDEALEAFKTLCLHEGIIPALESSHALAHALKMMRETPEKEQLLVVNLSGRGDKDIFTVHDILKARGEI</sequence>
<gene>
    <name evidence="1" type="primary">trpB</name>
    <name type="ordered locus">SBO_1805</name>
</gene>
<dbReference type="EC" id="4.2.1.20" evidence="1"/>
<dbReference type="EMBL" id="CP000036">
    <property type="protein sequence ID" value="ABB66404.1"/>
    <property type="molecule type" value="Genomic_DNA"/>
</dbReference>
<dbReference type="RefSeq" id="WP_000209504.1">
    <property type="nucleotide sequence ID" value="NC_007613.1"/>
</dbReference>
<dbReference type="SMR" id="Q31ZV4"/>
<dbReference type="KEGG" id="sbo:SBO_1805"/>
<dbReference type="HOGENOM" id="CLU_016734_3_1_6"/>
<dbReference type="UniPathway" id="UPA00035">
    <property type="reaction ID" value="UER00044"/>
</dbReference>
<dbReference type="Proteomes" id="UP000007067">
    <property type="component" value="Chromosome"/>
</dbReference>
<dbReference type="GO" id="GO:0005737">
    <property type="term" value="C:cytoplasm"/>
    <property type="evidence" value="ECO:0007669"/>
    <property type="project" value="TreeGrafter"/>
</dbReference>
<dbReference type="GO" id="GO:0004834">
    <property type="term" value="F:tryptophan synthase activity"/>
    <property type="evidence" value="ECO:0007669"/>
    <property type="project" value="UniProtKB-UniRule"/>
</dbReference>
<dbReference type="CDD" id="cd06446">
    <property type="entry name" value="Trp-synth_B"/>
    <property type="match status" value="1"/>
</dbReference>
<dbReference type="FunFam" id="3.40.50.1100:FF:000001">
    <property type="entry name" value="Tryptophan synthase beta chain"/>
    <property type="match status" value="1"/>
</dbReference>
<dbReference type="FunFam" id="3.40.50.1100:FF:000004">
    <property type="entry name" value="Tryptophan synthase beta chain"/>
    <property type="match status" value="1"/>
</dbReference>
<dbReference type="Gene3D" id="3.40.50.1100">
    <property type="match status" value="2"/>
</dbReference>
<dbReference type="HAMAP" id="MF_00133">
    <property type="entry name" value="Trp_synth_beta"/>
    <property type="match status" value="1"/>
</dbReference>
<dbReference type="InterPro" id="IPR006653">
    <property type="entry name" value="Trp_synth_b_CS"/>
</dbReference>
<dbReference type="InterPro" id="IPR006654">
    <property type="entry name" value="Trp_synth_beta"/>
</dbReference>
<dbReference type="InterPro" id="IPR023026">
    <property type="entry name" value="Trp_synth_beta/beta-like"/>
</dbReference>
<dbReference type="InterPro" id="IPR001926">
    <property type="entry name" value="TrpB-like_PALP"/>
</dbReference>
<dbReference type="InterPro" id="IPR036052">
    <property type="entry name" value="TrpB-like_PALP_sf"/>
</dbReference>
<dbReference type="NCBIfam" id="TIGR00263">
    <property type="entry name" value="trpB"/>
    <property type="match status" value="1"/>
</dbReference>
<dbReference type="PANTHER" id="PTHR48077:SF3">
    <property type="entry name" value="TRYPTOPHAN SYNTHASE"/>
    <property type="match status" value="1"/>
</dbReference>
<dbReference type="PANTHER" id="PTHR48077">
    <property type="entry name" value="TRYPTOPHAN SYNTHASE-RELATED"/>
    <property type="match status" value="1"/>
</dbReference>
<dbReference type="Pfam" id="PF00291">
    <property type="entry name" value="PALP"/>
    <property type="match status" value="1"/>
</dbReference>
<dbReference type="PIRSF" id="PIRSF001413">
    <property type="entry name" value="Trp_syn_beta"/>
    <property type="match status" value="1"/>
</dbReference>
<dbReference type="SUPFAM" id="SSF53686">
    <property type="entry name" value="Tryptophan synthase beta subunit-like PLP-dependent enzymes"/>
    <property type="match status" value="1"/>
</dbReference>
<dbReference type="PROSITE" id="PS00168">
    <property type="entry name" value="TRP_SYNTHASE_BETA"/>
    <property type="match status" value="1"/>
</dbReference>
<comment type="function">
    <text evidence="1">The beta subunit is responsible for the synthesis of L-tryptophan from indole and L-serine.</text>
</comment>
<comment type="catalytic activity">
    <reaction evidence="1">
        <text>(1S,2R)-1-C-(indol-3-yl)glycerol 3-phosphate + L-serine = D-glyceraldehyde 3-phosphate + L-tryptophan + H2O</text>
        <dbReference type="Rhea" id="RHEA:10532"/>
        <dbReference type="ChEBI" id="CHEBI:15377"/>
        <dbReference type="ChEBI" id="CHEBI:33384"/>
        <dbReference type="ChEBI" id="CHEBI:57912"/>
        <dbReference type="ChEBI" id="CHEBI:58866"/>
        <dbReference type="ChEBI" id="CHEBI:59776"/>
        <dbReference type="EC" id="4.2.1.20"/>
    </reaction>
</comment>
<comment type="cofactor">
    <cofactor evidence="1">
        <name>pyridoxal 5'-phosphate</name>
        <dbReference type="ChEBI" id="CHEBI:597326"/>
    </cofactor>
</comment>
<comment type="pathway">
    <text evidence="1">Amino-acid biosynthesis; L-tryptophan biosynthesis; L-tryptophan from chorismate: step 5/5.</text>
</comment>
<comment type="subunit">
    <text evidence="1">Tetramer of two alpha and two beta chains.</text>
</comment>
<comment type="similarity">
    <text evidence="1">Belongs to the TrpB family.</text>
</comment>
<protein>
    <recommendedName>
        <fullName evidence="1">Tryptophan synthase beta chain</fullName>
        <ecNumber evidence="1">4.2.1.20</ecNumber>
    </recommendedName>
</protein>
<keyword id="KW-0028">Amino-acid biosynthesis</keyword>
<keyword id="KW-0057">Aromatic amino acid biosynthesis</keyword>
<keyword id="KW-0456">Lyase</keyword>
<keyword id="KW-0663">Pyridoxal phosphate</keyword>
<keyword id="KW-0822">Tryptophan biosynthesis</keyword>
<feature type="chain" id="PRO_1000018396" description="Tryptophan synthase beta chain">
    <location>
        <begin position="1"/>
        <end position="397"/>
    </location>
</feature>
<feature type="modified residue" description="N6-(pyridoxal phosphate)lysine" evidence="1">
    <location>
        <position position="87"/>
    </location>
</feature>
<proteinExistence type="inferred from homology"/>
<accession>Q31ZV4</accession>
<name>TRPB_SHIBS</name>
<organism>
    <name type="scientific">Shigella boydii serotype 4 (strain Sb227)</name>
    <dbReference type="NCBI Taxonomy" id="300268"/>
    <lineage>
        <taxon>Bacteria</taxon>
        <taxon>Pseudomonadati</taxon>
        <taxon>Pseudomonadota</taxon>
        <taxon>Gammaproteobacteria</taxon>
        <taxon>Enterobacterales</taxon>
        <taxon>Enterobacteriaceae</taxon>
        <taxon>Shigella</taxon>
    </lineage>
</organism>
<evidence type="ECO:0000255" key="1">
    <source>
        <dbReference type="HAMAP-Rule" id="MF_00133"/>
    </source>
</evidence>